<keyword id="KW-0963">Cytoplasm</keyword>
<keyword id="KW-0251">Elongation factor</keyword>
<keyword id="KW-0648">Protein biosynthesis</keyword>
<dbReference type="EMBL" id="CP000056">
    <property type="protein sequence ID" value="AAX72644.1"/>
    <property type="molecule type" value="Genomic_DNA"/>
</dbReference>
<dbReference type="RefSeq" id="WP_002993230.1">
    <property type="nucleotide sequence ID" value="NC_007296.2"/>
</dbReference>
<dbReference type="SMR" id="Q48RL6"/>
<dbReference type="GeneID" id="83689984"/>
<dbReference type="KEGG" id="spb:M28_Spy1534"/>
<dbReference type="HOGENOM" id="CLU_074944_3_0_9"/>
<dbReference type="UniPathway" id="UPA00345"/>
<dbReference type="GO" id="GO:0005737">
    <property type="term" value="C:cytoplasm"/>
    <property type="evidence" value="ECO:0007669"/>
    <property type="project" value="UniProtKB-SubCell"/>
</dbReference>
<dbReference type="GO" id="GO:0003746">
    <property type="term" value="F:translation elongation factor activity"/>
    <property type="evidence" value="ECO:0007669"/>
    <property type="project" value="UniProtKB-UniRule"/>
</dbReference>
<dbReference type="GO" id="GO:0043043">
    <property type="term" value="P:peptide biosynthetic process"/>
    <property type="evidence" value="ECO:0007669"/>
    <property type="project" value="InterPro"/>
</dbReference>
<dbReference type="CDD" id="cd04470">
    <property type="entry name" value="S1_EF-P_repeat_1"/>
    <property type="match status" value="1"/>
</dbReference>
<dbReference type="CDD" id="cd05794">
    <property type="entry name" value="S1_EF-P_repeat_2"/>
    <property type="match status" value="1"/>
</dbReference>
<dbReference type="FunFam" id="2.30.30.30:FF:000003">
    <property type="entry name" value="Elongation factor P"/>
    <property type="match status" value="1"/>
</dbReference>
<dbReference type="FunFam" id="2.40.50.140:FF:000004">
    <property type="entry name" value="Elongation factor P"/>
    <property type="match status" value="1"/>
</dbReference>
<dbReference type="FunFam" id="2.40.50.140:FF:000009">
    <property type="entry name" value="Elongation factor P"/>
    <property type="match status" value="1"/>
</dbReference>
<dbReference type="Gene3D" id="2.30.30.30">
    <property type="match status" value="1"/>
</dbReference>
<dbReference type="Gene3D" id="2.40.50.140">
    <property type="entry name" value="Nucleic acid-binding proteins"/>
    <property type="match status" value="2"/>
</dbReference>
<dbReference type="HAMAP" id="MF_00141">
    <property type="entry name" value="EF_P"/>
    <property type="match status" value="1"/>
</dbReference>
<dbReference type="InterPro" id="IPR015365">
    <property type="entry name" value="Elong-fact-P_C"/>
</dbReference>
<dbReference type="InterPro" id="IPR012340">
    <property type="entry name" value="NA-bd_OB-fold"/>
</dbReference>
<dbReference type="InterPro" id="IPR014722">
    <property type="entry name" value="Rib_uL2_dom2"/>
</dbReference>
<dbReference type="InterPro" id="IPR020599">
    <property type="entry name" value="Transl_elong_fac_P/YeiP"/>
</dbReference>
<dbReference type="InterPro" id="IPR013185">
    <property type="entry name" value="Transl_elong_KOW-like"/>
</dbReference>
<dbReference type="InterPro" id="IPR001059">
    <property type="entry name" value="Transl_elong_P/YeiP_cen"/>
</dbReference>
<dbReference type="InterPro" id="IPR013852">
    <property type="entry name" value="Transl_elong_P/YeiP_CS"/>
</dbReference>
<dbReference type="InterPro" id="IPR011768">
    <property type="entry name" value="Transl_elongation_fac_P"/>
</dbReference>
<dbReference type="InterPro" id="IPR008991">
    <property type="entry name" value="Translation_prot_SH3-like_sf"/>
</dbReference>
<dbReference type="NCBIfam" id="TIGR00038">
    <property type="entry name" value="efp"/>
    <property type="match status" value="1"/>
</dbReference>
<dbReference type="NCBIfam" id="NF001810">
    <property type="entry name" value="PRK00529.1"/>
    <property type="match status" value="1"/>
</dbReference>
<dbReference type="PANTHER" id="PTHR30053">
    <property type="entry name" value="ELONGATION FACTOR P"/>
    <property type="match status" value="1"/>
</dbReference>
<dbReference type="PANTHER" id="PTHR30053:SF12">
    <property type="entry name" value="ELONGATION FACTOR P (EF-P) FAMILY PROTEIN"/>
    <property type="match status" value="1"/>
</dbReference>
<dbReference type="Pfam" id="PF01132">
    <property type="entry name" value="EFP"/>
    <property type="match status" value="1"/>
</dbReference>
<dbReference type="Pfam" id="PF08207">
    <property type="entry name" value="EFP_N"/>
    <property type="match status" value="1"/>
</dbReference>
<dbReference type="Pfam" id="PF09285">
    <property type="entry name" value="Elong-fact-P_C"/>
    <property type="match status" value="1"/>
</dbReference>
<dbReference type="PIRSF" id="PIRSF005901">
    <property type="entry name" value="EF-P"/>
    <property type="match status" value="1"/>
</dbReference>
<dbReference type="SMART" id="SM01185">
    <property type="entry name" value="EFP"/>
    <property type="match status" value="1"/>
</dbReference>
<dbReference type="SMART" id="SM00841">
    <property type="entry name" value="Elong-fact-P_C"/>
    <property type="match status" value="1"/>
</dbReference>
<dbReference type="SUPFAM" id="SSF50249">
    <property type="entry name" value="Nucleic acid-binding proteins"/>
    <property type="match status" value="2"/>
</dbReference>
<dbReference type="SUPFAM" id="SSF50104">
    <property type="entry name" value="Translation proteins SH3-like domain"/>
    <property type="match status" value="1"/>
</dbReference>
<dbReference type="PROSITE" id="PS01275">
    <property type="entry name" value="EFP"/>
    <property type="match status" value="1"/>
</dbReference>
<sequence length="185" mass="20483">MIEASKLKAGMTFESEGKLIRVLEASHHKPGKGNTIMRMKLRDVRTGSTFDTTYRPDEKFEQAIIETVPAQYLYKMDDTAYFMNTDTYDQYEIPVANVEQELLYILENSDVKIQFYGSEVIGVTVPTTVELTVAETQPSIKGATVTGSGKPATLETGLVVNVPDFIEAGQKLIINTAEGTYVSRA</sequence>
<protein>
    <recommendedName>
        <fullName evidence="1">Elongation factor P</fullName>
        <shortName evidence="1">EF-P</shortName>
    </recommendedName>
</protein>
<name>EFP_STRPM</name>
<accession>Q48RL6</accession>
<reference key="1">
    <citation type="journal article" date="2005" name="J. Infect. Dis.">
        <title>Genome sequence of a serotype M28 strain of group A Streptococcus: potential new insights into puerperal sepsis and bacterial disease specificity.</title>
        <authorList>
            <person name="Green N.M."/>
            <person name="Zhang S."/>
            <person name="Porcella S.F."/>
            <person name="Nagiec M.J."/>
            <person name="Barbian K.D."/>
            <person name="Beres S.B."/>
            <person name="Lefebvre R.B."/>
            <person name="Musser J.M."/>
        </authorList>
    </citation>
    <scope>NUCLEOTIDE SEQUENCE [LARGE SCALE GENOMIC DNA]</scope>
    <source>
        <strain>MGAS6180</strain>
    </source>
</reference>
<comment type="function">
    <text evidence="1">Involved in peptide bond synthesis. Stimulates efficient translation and peptide-bond synthesis on native or reconstituted 70S ribosomes in vitro. Probably functions indirectly by altering the affinity of the ribosome for aminoacyl-tRNA, thus increasing their reactivity as acceptors for peptidyl transferase.</text>
</comment>
<comment type="pathway">
    <text evidence="1">Protein biosynthesis; polypeptide chain elongation.</text>
</comment>
<comment type="subcellular location">
    <subcellularLocation>
        <location evidence="1">Cytoplasm</location>
    </subcellularLocation>
</comment>
<comment type="similarity">
    <text evidence="1">Belongs to the elongation factor P family.</text>
</comment>
<gene>
    <name evidence="1" type="primary">efp</name>
    <name type="ordered locus">M28_Spy1534</name>
</gene>
<proteinExistence type="inferred from homology"/>
<evidence type="ECO:0000255" key="1">
    <source>
        <dbReference type="HAMAP-Rule" id="MF_00141"/>
    </source>
</evidence>
<organism>
    <name type="scientific">Streptococcus pyogenes serotype M28 (strain MGAS6180)</name>
    <dbReference type="NCBI Taxonomy" id="319701"/>
    <lineage>
        <taxon>Bacteria</taxon>
        <taxon>Bacillati</taxon>
        <taxon>Bacillota</taxon>
        <taxon>Bacilli</taxon>
        <taxon>Lactobacillales</taxon>
        <taxon>Streptococcaceae</taxon>
        <taxon>Streptococcus</taxon>
    </lineage>
</organism>
<feature type="chain" id="PRO_1000010877" description="Elongation factor P">
    <location>
        <begin position="1"/>
        <end position="185"/>
    </location>
</feature>